<gene>
    <name type="primary">Stip1</name>
    <name type="synonym">Hop</name>
</gene>
<reference key="1">
    <citation type="journal article" date="1998" name="Mol. Cell. Biol.">
        <title>The carboxy-terminal domain of Hsc70 provides binding sites for a distinct set of chaperone cofactors.</title>
        <authorList>
            <person name="Demand J."/>
            <person name="Luders J."/>
            <person name="Hoehfeld J."/>
        </authorList>
    </citation>
    <scope>NUCLEOTIDE SEQUENCE [MRNA]</scope>
    <scope>FUNCTION</scope>
    <scope>INTERACTION WITH HSPA8</scope>
    <source>
        <strain>Sprague-Dawley</strain>
        <tissue>Liver</tissue>
    </source>
</reference>
<reference key="2">
    <citation type="journal article" date="2004" name="Genome Res.">
        <title>The status, quality, and expansion of the NIH full-length cDNA project: the Mammalian Gene Collection (MGC).</title>
        <authorList>
            <consortium name="The MGC Project Team"/>
        </authorList>
    </citation>
    <scope>NUCLEOTIDE SEQUENCE [LARGE SCALE MRNA]</scope>
    <source>
        <tissue>Pituitary</tissue>
    </source>
</reference>
<reference key="3">
    <citation type="submission" date="2007-04" db="UniProtKB">
        <authorList>
            <person name="Lubec G."/>
            <person name="Afjehi-Sadat L."/>
            <person name="Chen W.-Q."/>
        </authorList>
    </citation>
    <scope>PROTEIN SEQUENCE OF 14-44; 78-87; 124-136; 253-272 AND 316-325</scope>
    <scope>IDENTIFICATION BY MASS SPECTROMETRY</scope>
    <source>
        <strain>Sprague-Dawley</strain>
        <tissue>Hippocampus</tissue>
        <tissue>Spinal cord</tissue>
    </source>
</reference>
<keyword id="KW-0007">Acetylation</keyword>
<keyword id="KW-0963">Cytoplasm</keyword>
<keyword id="KW-0903">Direct protein sequencing</keyword>
<keyword id="KW-1017">Isopeptide bond</keyword>
<keyword id="KW-0539">Nucleus</keyword>
<keyword id="KW-0597">Phosphoprotein</keyword>
<keyword id="KW-1185">Reference proteome</keyword>
<keyword id="KW-0677">Repeat</keyword>
<keyword id="KW-0802">TPR repeat</keyword>
<keyword id="KW-0832">Ubl conjugation</keyword>
<organism>
    <name type="scientific">Rattus norvegicus</name>
    <name type="common">Rat</name>
    <dbReference type="NCBI Taxonomy" id="10116"/>
    <lineage>
        <taxon>Eukaryota</taxon>
        <taxon>Metazoa</taxon>
        <taxon>Chordata</taxon>
        <taxon>Craniata</taxon>
        <taxon>Vertebrata</taxon>
        <taxon>Euteleostomi</taxon>
        <taxon>Mammalia</taxon>
        <taxon>Eutheria</taxon>
        <taxon>Euarchontoglires</taxon>
        <taxon>Glires</taxon>
        <taxon>Rodentia</taxon>
        <taxon>Myomorpha</taxon>
        <taxon>Muroidea</taxon>
        <taxon>Muridae</taxon>
        <taxon>Murinae</taxon>
        <taxon>Rattus</taxon>
    </lineage>
</organism>
<protein>
    <recommendedName>
        <fullName>Stress-induced-phosphoprotein 1</fullName>
        <shortName>STI1</shortName>
    </recommendedName>
    <alternativeName>
        <fullName>Hsc70/Hsp90-organizing protein</fullName>
        <shortName>Hop</shortName>
    </alternativeName>
</protein>
<feature type="chain" id="PRO_0000106374" description="Stress-induced-phosphoprotein 1">
    <location>
        <begin position="1"/>
        <end position="543"/>
    </location>
</feature>
<feature type="repeat" description="TPR 1">
    <location>
        <begin position="4"/>
        <end position="37"/>
    </location>
</feature>
<feature type="repeat" description="TPR 2">
    <location>
        <begin position="39"/>
        <end position="71"/>
    </location>
</feature>
<feature type="repeat" description="TPR 3">
    <location>
        <begin position="73"/>
        <end position="105"/>
    </location>
</feature>
<feature type="domain" description="STI1 1">
    <location>
        <begin position="130"/>
        <end position="169"/>
    </location>
</feature>
<feature type="repeat" description="TPR 4">
    <location>
        <begin position="225"/>
        <end position="258"/>
    </location>
</feature>
<feature type="repeat" description="TPR 5">
    <location>
        <begin position="260"/>
        <end position="292"/>
    </location>
</feature>
<feature type="repeat" description="TPR 6">
    <location>
        <begin position="300"/>
        <end position="333"/>
    </location>
</feature>
<feature type="repeat" description="TPR 7">
    <location>
        <begin position="360"/>
        <end position="393"/>
    </location>
</feature>
<feature type="repeat" description="TPR 8">
    <location>
        <begin position="395"/>
        <end position="427"/>
    </location>
</feature>
<feature type="repeat" description="TPR 9">
    <location>
        <begin position="428"/>
        <end position="461"/>
    </location>
</feature>
<feature type="domain" description="STI1 2">
    <location>
        <begin position="492"/>
        <end position="531"/>
    </location>
</feature>
<feature type="region of interest" description="Disordered" evidence="6">
    <location>
        <begin position="191"/>
        <end position="233"/>
    </location>
</feature>
<feature type="short sequence motif" description="Bipartite nuclear localization signal" evidence="5">
    <location>
        <begin position="222"/>
        <end position="239"/>
    </location>
</feature>
<feature type="compositionally biased region" description="Basic and acidic residues" evidence="6">
    <location>
        <begin position="205"/>
        <end position="233"/>
    </location>
</feature>
<feature type="modified residue" description="N-acetylmethionine" evidence="2">
    <location>
        <position position="1"/>
    </location>
</feature>
<feature type="modified residue" description="N6-acetyllysine" evidence="2">
    <location>
        <position position="8"/>
    </location>
</feature>
<feature type="modified residue" description="Phosphoserine" evidence="2">
    <location>
        <position position="16"/>
    </location>
</feature>
<feature type="modified residue" description="Phosphothreonine" evidence="2">
    <location>
        <position position="198"/>
    </location>
</feature>
<feature type="modified residue" description="N6-acetyllysine" evidence="2">
    <location>
        <position position="301"/>
    </location>
</feature>
<feature type="modified residue" description="N6-acetyllysine" evidence="2">
    <location>
        <position position="312"/>
    </location>
</feature>
<feature type="modified residue" description="N6-acetyllysine" evidence="2">
    <location>
        <position position="325"/>
    </location>
</feature>
<feature type="modified residue" description="Phosphothreonine" evidence="2">
    <location>
        <position position="332"/>
    </location>
</feature>
<feature type="modified residue" description="N6-acetyllysine" evidence="2">
    <location>
        <position position="344"/>
    </location>
</feature>
<feature type="modified residue" description="Phosphotyrosine" evidence="2">
    <location>
        <position position="354"/>
    </location>
</feature>
<feature type="modified residue" description="N6-acetyllysine" evidence="2">
    <location>
        <position position="446"/>
    </location>
</feature>
<feature type="modified residue" description="Phosphoserine" evidence="2">
    <location>
        <position position="481"/>
    </location>
</feature>
<feature type="cross-link" description="Glycyl lysine isopeptide (Lys-Gly) (interchain with G-Cter in SUMO1); alternate" evidence="2">
    <location>
        <position position="123"/>
    </location>
</feature>
<feature type="cross-link" description="Glycyl lysine isopeptide (Lys-Gly) (interchain with G-Cter in SUMO2); alternate" evidence="2">
    <location>
        <position position="123"/>
    </location>
</feature>
<feature type="cross-link" description="Glycyl lysine isopeptide (Lys-Gly) (interchain with G-Cter in SUMO1); alternate" evidence="2">
    <location>
        <position position="210"/>
    </location>
</feature>
<feature type="cross-link" description="Glycyl lysine isopeptide (Lys-Gly) (interchain with G-Cter in SUMO2); alternate" evidence="2">
    <location>
        <position position="210"/>
    </location>
</feature>
<comment type="function">
    <text evidence="2 7">Acts as a co-chaperone for HSP90AA1 (By similarity). Mediates the association of the molecular chaperones HSPA8/HSC70 and HSP90 (PubMed:9528774).</text>
</comment>
<comment type="subunit">
    <text evidence="2 3 7">Probably forms a complex composed of chaperones HSP90 and HSP70, co-chaperones STIP1/HOP, CDC37, PPP5C, PTGES3/p23, TSC1 and client protein TSC2 (By similarity). Forms a complex with HSPA8/HSC70, HSPCA/HSP-86 and HSPCB/HSP-84. Interacts with PACRG. Interacts with EEF1AKMT3 (By similarity). Interacts with HSP90/HSP90AA1; the interaction dissociates the PPP5C:HSP90AA1 interaction. Interacts with FLCN, FNIP1 and FNIP2 (By similarity). Interacts with HSPA8/HSC70 (PubMed:9528774). Interacts with HSP90AB1; upon SMYD2-dependent HSP90AB1 methylation (By similarity).</text>
</comment>
<comment type="subcellular location">
    <subcellularLocation>
        <location evidence="3">Cytoplasm</location>
    </subcellularLocation>
    <subcellularLocation>
        <location evidence="3">Nucleus</location>
    </subcellularLocation>
    <subcellularLocation>
        <location evidence="4">Dynein axonemal particle</location>
    </subcellularLocation>
</comment>
<comment type="domain">
    <text evidence="1">The TPR 1 repeat interacts with the C-terminal of HSC70. The TPR 4, 5 and 6 repeats (also called TPR2A domain) and TPR 7, 8 and 9 repeats (also called TPR2B domain) interact with HSP90 (By similarity).</text>
</comment>
<accession>O35814</accession>
<proteinExistence type="evidence at protein level"/>
<sequence>MEQVNELKEKGNKALSAGNIDDALQCYSEAIKLDPQNHVLYSNRSAAYAKKGDYQKAYEDGCKTVDLKPDWGKGYSRKAAALEFLNRFEEAKRTYEEGLKHEANNLQLKEGLQNMEARLAERKFMNPFNLPNLYQKLENDPRTRTLLSDPTYRELIEQLQNKPSDLGTKLQDPRVMTTLSVLLGVDLGSMDEEEEAATPPPPPPPKKEAKPEPMEEDLPENKKQALKEKELGNDAYKKKDFDKALKHYDKAKELDPTNMTYITNQAAVHFEKGDYNKCRELCEKAIEVGRENREDYRQIAKAYARIGNSYFKEERYKDAIHFYNKSLAEHRTPDVLKKCQQAEKILKEQERLAYINPDLALEEKNKGNECFQKGDYPQAMKHYTEAIKRNPRDAKLYSNRAACYTKLLEFQLALKDCEECIQLEPTFIKGYTRKAAALEAMKDYTKAMDVYQKALDLDSSCKEAADGYQRCMMAQYNRHDSPEDVKRRAMADPEVQQIMSDPAMRLILEQMQKDPQALSEHLKNPVIAQKIQKLMDVGLIAIR</sequence>
<evidence type="ECO:0000250" key="1"/>
<evidence type="ECO:0000250" key="2">
    <source>
        <dbReference type="UniProtKB" id="P31948"/>
    </source>
</evidence>
<evidence type="ECO:0000250" key="3">
    <source>
        <dbReference type="UniProtKB" id="Q60864"/>
    </source>
</evidence>
<evidence type="ECO:0000250" key="4">
    <source>
        <dbReference type="UniProtKB" id="Q7ZWU1"/>
    </source>
</evidence>
<evidence type="ECO:0000255" key="5"/>
<evidence type="ECO:0000256" key="6">
    <source>
        <dbReference type="SAM" id="MobiDB-lite"/>
    </source>
</evidence>
<evidence type="ECO:0000269" key="7">
    <source>
    </source>
</evidence>
<dbReference type="EMBL" id="Y15068">
    <property type="protein sequence ID" value="CAA75351.1"/>
    <property type="molecule type" value="mRNA"/>
</dbReference>
<dbReference type="EMBL" id="BC061529">
    <property type="protein sequence ID" value="AAH61529.1"/>
    <property type="molecule type" value="mRNA"/>
</dbReference>
<dbReference type="RefSeq" id="NP_620266.1">
    <property type="nucleotide sequence ID" value="NM_138911.4"/>
</dbReference>
<dbReference type="SMR" id="O35814"/>
<dbReference type="BioGRID" id="251401">
    <property type="interactions" value="9"/>
</dbReference>
<dbReference type="FunCoup" id="O35814">
    <property type="interactions" value="3221"/>
</dbReference>
<dbReference type="IntAct" id="O35814">
    <property type="interactions" value="6"/>
</dbReference>
<dbReference type="MINT" id="O35814"/>
<dbReference type="STRING" id="10116.ENSRNOP00000028743"/>
<dbReference type="iPTMnet" id="O35814"/>
<dbReference type="PhosphoSitePlus" id="O35814"/>
<dbReference type="SwissPalm" id="O35814"/>
<dbReference type="jPOST" id="O35814"/>
<dbReference type="PaxDb" id="10116-ENSRNOP00000028743"/>
<dbReference type="Ensembl" id="ENSRNOT00000116635.1">
    <property type="protein sequence ID" value="ENSRNOP00000091714.1"/>
    <property type="gene ID" value="ENSRNOG00000021164.8"/>
</dbReference>
<dbReference type="GeneID" id="192277"/>
<dbReference type="KEGG" id="rno:192277"/>
<dbReference type="UCSC" id="RGD:621599">
    <property type="organism name" value="rat"/>
</dbReference>
<dbReference type="AGR" id="RGD:621599"/>
<dbReference type="CTD" id="10963"/>
<dbReference type="RGD" id="621599">
    <property type="gene designation" value="Stip1"/>
</dbReference>
<dbReference type="eggNOG" id="KOG0548">
    <property type="taxonomic scope" value="Eukaryota"/>
</dbReference>
<dbReference type="GeneTree" id="ENSGT00940000154911"/>
<dbReference type="HOGENOM" id="CLU_000134_46_5_1"/>
<dbReference type="InParanoid" id="O35814"/>
<dbReference type="OrthoDB" id="29626at9989"/>
<dbReference type="PhylomeDB" id="O35814"/>
<dbReference type="TreeFam" id="TF300478"/>
<dbReference type="Reactome" id="R-RNO-3371497">
    <property type="pathway name" value="HSP90 chaperone cycle for steroid hormone receptors (SHR) in the presence of ligand"/>
</dbReference>
<dbReference type="Reactome" id="R-RNO-9696273">
    <property type="pathway name" value="RND1 GTPase cycle"/>
</dbReference>
<dbReference type="PRO" id="PR:O35814"/>
<dbReference type="Proteomes" id="UP000002494">
    <property type="component" value="Chromosome 1"/>
</dbReference>
<dbReference type="Bgee" id="ENSRNOG00000021164">
    <property type="expression patterns" value="Expressed in cerebellum and 20 other cell types or tissues"/>
</dbReference>
<dbReference type="GO" id="GO:0120293">
    <property type="term" value="C:dynein axonemal particle"/>
    <property type="evidence" value="ECO:0000250"/>
    <property type="project" value="UniProtKB"/>
</dbReference>
<dbReference type="GO" id="GO:0005634">
    <property type="term" value="C:nucleus"/>
    <property type="evidence" value="ECO:0000266"/>
    <property type="project" value="RGD"/>
</dbReference>
<dbReference type="GO" id="GO:0101031">
    <property type="term" value="C:protein folding chaperone complex"/>
    <property type="evidence" value="ECO:0000266"/>
    <property type="project" value="RGD"/>
</dbReference>
<dbReference type="GO" id="GO:0032991">
    <property type="term" value="C:protein-containing complex"/>
    <property type="evidence" value="ECO:0000314"/>
    <property type="project" value="RGD"/>
</dbReference>
<dbReference type="GO" id="GO:0030544">
    <property type="term" value="F:Hsp70 protein binding"/>
    <property type="evidence" value="ECO:0000353"/>
    <property type="project" value="RGD"/>
</dbReference>
<dbReference type="GO" id="GO:0051879">
    <property type="term" value="F:Hsp90 protein binding"/>
    <property type="evidence" value="ECO:0000266"/>
    <property type="project" value="RGD"/>
</dbReference>
<dbReference type="GO" id="GO:0051087">
    <property type="term" value="F:protein-folding chaperone binding"/>
    <property type="evidence" value="ECO:0000353"/>
    <property type="project" value="RGD"/>
</dbReference>
<dbReference type="GO" id="GO:0098761">
    <property type="term" value="P:cellular response to interleukin-7"/>
    <property type="evidence" value="ECO:0000266"/>
    <property type="project" value="RGD"/>
</dbReference>
<dbReference type="FunFam" id="1.10.260.100:FF:000004">
    <property type="entry name" value="Putative stress-induced-phosphoprotein 1"/>
    <property type="match status" value="1"/>
</dbReference>
<dbReference type="FunFam" id="1.25.40.10:FF:000010">
    <property type="entry name" value="Stress-induced phosphoprotein 1"/>
    <property type="match status" value="1"/>
</dbReference>
<dbReference type="FunFam" id="1.25.40.10:FF:000020">
    <property type="entry name" value="Stress-induced phosphoprotein 1"/>
    <property type="match status" value="1"/>
</dbReference>
<dbReference type="FunFam" id="1.10.260.100:FF:000002">
    <property type="entry name" value="Stress-induced-phosphoprotein 1 (Hsp70/Hsp90-organizing)"/>
    <property type="match status" value="1"/>
</dbReference>
<dbReference type="FunFam" id="1.25.40.10:FF:000027">
    <property type="entry name" value="stress-induced-phosphoprotein 1 isoform X1"/>
    <property type="match status" value="1"/>
</dbReference>
<dbReference type="Gene3D" id="1.10.260.100">
    <property type="match status" value="2"/>
</dbReference>
<dbReference type="Gene3D" id="1.25.40.10">
    <property type="entry name" value="Tetratricopeptide repeat domain"/>
    <property type="match status" value="3"/>
</dbReference>
<dbReference type="InterPro" id="IPR041243">
    <property type="entry name" value="STI1/HOP_DP"/>
</dbReference>
<dbReference type="InterPro" id="IPR006636">
    <property type="entry name" value="STI1_HS-bd"/>
</dbReference>
<dbReference type="InterPro" id="IPR011990">
    <property type="entry name" value="TPR-like_helical_dom_sf"/>
</dbReference>
<dbReference type="InterPro" id="IPR019734">
    <property type="entry name" value="TPR_rpt"/>
</dbReference>
<dbReference type="PANTHER" id="PTHR22904:SF523">
    <property type="entry name" value="STRESS-INDUCED-PHOSPHOPROTEIN 1"/>
    <property type="match status" value="1"/>
</dbReference>
<dbReference type="PANTHER" id="PTHR22904">
    <property type="entry name" value="TPR REPEAT CONTAINING PROTEIN"/>
    <property type="match status" value="1"/>
</dbReference>
<dbReference type="Pfam" id="PF17830">
    <property type="entry name" value="STI1-HOP_DP"/>
    <property type="match status" value="2"/>
</dbReference>
<dbReference type="Pfam" id="PF00515">
    <property type="entry name" value="TPR_1"/>
    <property type="match status" value="1"/>
</dbReference>
<dbReference type="Pfam" id="PF13414">
    <property type="entry name" value="TPR_11"/>
    <property type="match status" value="2"/>
</dbReference>
<dbReference type="Pfam" id="PF13424">
    <property type="entry name" value="TPR_12"/>
    <property type="match status" value="1"/>
</dbReference>
<dbReference type="Pfam" id="PF13181">
    <property type="entry name" value="TPR_8"/>
    <property type="match status" value="1"/>
</dbReference>
<dbReference type="SMART" id="SM00727">
    <property type="entry name" value="STI1"/>
    <property type="match status" value="2"/>
</dbReference>
<dbReference type="SMART" id="SM00028">
    <property type="entry name" value="TPR"/>
    <property type="match status" value="9"/>
</dbReference>
<dbReference type="SUPFAM" id="SSF48452">
    <property type="entry name" value="TPR-like"/>
    <property type="match status" value="3"/>
</dbReference>
<dbReference type="PROSITE" id="PS50005">
    <property type="entry name" value="TPR"/>
    <property type="match status" value="9"/>
</dbReference>
<dbReference type="PROSITE" id="PS50293">
    <property type="entry name" value="TPR_REGION"/>
    <property type="match status" value="2"/>
</dbReference>
<name>STIP1_RAT</name>